<feature type="chain" id="PRO_0000346516" description="PKHD-type hydroxylase Rmet_3078">
    <location>
        <begin position="1"/>
        <end position="228"/>
    </location>
</feature>
<feature type="domain" description="Fe2OG dioxygenase" evidence="1">
    <location>
        <begin position="80"/>
        <end position="180"/>
    </location>
</feature>
<feature type="binding site" evidence="1">
    <location>
        <position position="98"/>
    </location>
    <ligand>
        <name>Fe cation</name>
        <dbReference type="ChEBI" id="CHEBI:24875"/>
    </ligand>
</feature>
<feature type="binding site" evidence="1">
    <location>
        <position position="100"/>
    </location>
    <ligand>
        <name>Fe cation</name>
        <dbReference type="ChEBI" id="CHEBI:24875"/>
    </ligand>
</feature>
<feature type="binding site" evidence="1">
    <location>
        <position position="161"/>
    </location>
    <ligand>
        <name>Fe cation</name>
        <dbReference type="ChEBI" id="CHEBI:24875"/>
    </ligand>
</feature>
<feature type="binding site" evidence="1">
    <location>
        <position position="171"/>
    </location>
    <ligand>
        <name>2-oxoglutarate</name>
        <dbReference type="ChEBI" id="CHEBI:16810"/>
    </ligand>
</feature>
<evidence type="ECO:0000255" key="1">
    <source>
        <dbReference type="HAMAP-Rule" id="MF_00657"/>
    </source>
</evidence>
<comment type="cofactor">
    <cofactor evidence="1">
        <name>Fe(2+)</name>
        <dbReference type="ChEBI" id="CHEBI:29033"/>
    </cofactor>
    <text evidence="1">Binds 1 Fe(2+) ion per subunit.</text>
</comment>
<comment type="cofactor">
    <cofactor evidence="1">
        <name>L-ascorbate</name>
        <dbReference type="ChEBI" id="CHEBI:38290"/>
    </cofactor>
</comment>
<keyword id="KW-0223">Dioxygenase</keyword>
<keyword id="KW-0408">Iron</keyword>
<keyword id="KW-0479">Metal-binding</keyword>
<keyword id="KW-0560">Oxidoreductase</keyword>
<keyword id="KW-1185">Reference proteome</keyword>
<keyword id="KW-0847">Vitamin C</keyword>
<name>Y3078_CUPMC</name>
<dbReference type="EC" id="1.14.11.-" evidence="1"/>
<dbReference type="EMBL" id="CP000352">
    <property type="protein sequence ID" value="ABF09950.1"/>
    <property type="molecule type" value="Genomic_DNA"/>
</dbReference>
<dbReference type="RefSeq" id="WP_011517579.1">
    <property type="nucleotide sequence ID" value="NC_007973.1"/>
</dbReference>
<dbReference type="SMR" id="Q1LIS6"/>
<dbReference type="STRING" id="266264.Rmet_3078"/>
<dbReference type="KEGG" id="rme:Rmet_3078"/>
<dbReference type="eggNOG" id="COG3128">
    <property type="taxonomic scope" value="Bacteria"/>
</dbReference>
<dbReference type="HOGENOM" id="CLU_106663_0_0_4"/>
<dbReference type="Proteomes" id="UP000002429">
    <property type="component" value="Chromosome"/>
</dbReference>
<dbReference type="GO" id="GO:0016706">
    <property type="term" value="F:2-oxoglutarate-dependent dioxygenase activity"/>
    <property type="evidence" value="ECO:0007669"/>
    <property type="project" value="UniProtKB-UniRule"/>
</dbReference>
<dbReference type="GO" id="GO:0005506">
    <property type="term" value="F:iron ion binding"/>
    <property type="evidence" value="ECO:0007669"/>
    <property type="project" value="UniProtKB-UniRule"/>
</dbReference>
<dbReference type="GO" id="GO:0031418">
    <property type="term" value="F:L-ascorbic acid binding"/>
    <property type="evidence" value="ECO:0007669"/>
    <property type="project" value="UniProtKB-KW"/>
</dbReference>
<dbReference type="GO" id="GO:0006974">
    <property type="term" value="P:DNA damage response"/>
    <property type="evidence" value="ECO:0007669"/>
    <property type="project" value="TreeGrafter"/>
</dbReference>
<dbReference type="GO" id="GO:0006879">
    <property type="term" value="P:intracellular iron ion homeostasis"/>
    <property type="evidence" value="ECO:0007669"/>
    <property type="project" value="TreeGrafter"/>
</dbReference>
<dbReference type="Gene3D" id="2.60.120.620">
    <property type="entry name" value="q2cbj1_9rhob like domain"/>
    <property type="match status" value="1"/>
</dbReference>
<dbReference type="Gene3D" id="4.10.860.20">
    <property type="entry name" value="Rabenosyn, Rab binding domain"/>
    <property type="match status" value="1"/>
</dbReference>
<dbReference type="HAMAP" id="MF_00657">
    <property type="entry name" value="Hydroxyl_YbiX"/>
    <property type="match status" value="1"/>
</dbReference>
<dbReference type="InterPro" id="IPR005123">
    <property type="entry name" value="Oxoglu/Fe-dep_dioxygenase_dom"/>
</dbReference>
<dbReference type="InterPro" id="IPR041097">
    <property type="entry name" value="PKHD_C"/>
</dbReference>
<dbReference type="InterPro" id="IPR023550">
    <property type="entry name" value="PKHD_hydroxylase"/>
</dbReference>
<dbReference type="InterPro" id="IPR006620">
    <property type="entry name" value="Pro_4_hyd_alph"/>
</dbReference>
<dbReference type="InterPro" id="IPR044862">
    <property type="entry name" value="Pro_4_hyd_alph_FE2OG_OXY"/>
</dbReference>
<dbReference type="NCBIfam" id="NF003974">
    <property type="entry name" value="PRK05467.1-3"/>
    <property type="match status" value="1"/>
</dbReference>
<dbReference type="NCBIfam" id="NF003975">
    <property type="entry name" value="PRK05467.1-4"/>
    <property type="match status" value="1"/>
</dbReference>
<dbReference type="PANTHER" id="PTHR41536">
    <property type="entry name" value="PKHD-TYPE HYDROXYLASE YBIX"/>
    <property type="match status" value="1"/>
</dbReference>
<dbReference type="PANTHER" id="PTHR41536:SF1">
    <property type="entry name" value="PKHD-TYPE HYDROXYLASE YBIX"/>
    <property type="match status" value="1"/>
</dbReference>
<dbReference type="Pfam" id="PF13640">
    <property type="entry name" value="2OG-FeII_Oxy_3"/>
    <property type="match status" value="1"/>
</dbReference>
<dbReference type="Pfam" id="PF18331">
    <property type="entry name" value="PKHD_C"/>
    <property type="match status" value="1"/>
</dbReference>
<dbReference type="SMART" id="SM00702">
    <property type="entry name" value="P4Hc"/>
    <property type="match status" value="1"/>
</dbReference>
<dbReference type="SUPFAM" id="SSF51197">
    <property type="entry name" value="Clavaminate synthase-like"/>
    <property type="match status" value="1"/>
</dbReference>
<dbReference type="PROSITE" id="PS51471">
    <property type="entry name" value="FE2OG_OXY"/>
    <property type="match status" value="1"/>
</dbReference>
<proteinExistence type="inferred from homology"/>
<accession>Q1LIS6</accession>
<sequence length="228" mass="25463">MLVRIPQVLNAEQLAMLREQLDHAGDAWVDGRVTAGYSGAPVKFNQQIDERSEAAAQCQHLVLSALERNPLFISAVLPNIVYPPMFNRYSEGMTFGLHVDGGVRLHPHNGRKLRTDVSATLFLSDPASYDGGELQIEDTYGVHSVKLAAGDMVVYPSTSLHQVKPITRGVRVGCFFWIQSLIRDDGQRALLFDMDNAIQTLNQTNADERARRTLVGCYHNLLRQWSDT</sequence>
<reference key="1">
    <citation type="journal article" date="2010" name="PLoS ONE">
        <title>The complete genome sequence of Cupriavidus metallidurans strain CH34, a master survivalist in harsh and anthropogenic environments.</title>
        <authorList>
            <person name="Janssen P.J."/>
            <person name="Van Houdt R."/>
            <person name="Moors H."/>
            <person name="Monsieurs P."/>
            <person name="Morin N."/>
            <person name="Michaux A."/>
            <person name="Benotmane M.A."/>
            <person name="Leys N."/>
            <person name="Vallaeys T."/>
            <person name="Lapidus A."/>
            <person name="Monchy S."/>
            <person name="Medigue C."/>
            <person name="Taghavi S."/>
            <person name="McCorkle S."/>
            <person name="Dunn J."/>
            <person name="van der Lelie D."/>
            <person name="Mergeay M."/>
        </authorList>
    </citation>
    <scope>NUCLEOTIDE SEQUENCE [LARGE SCALE GENOMIC DNA]</scope>
    <source>
        <strain>ATCC 43123 / DSM 2839 / NBRC 102507 / CH34</strain>
    </source>
</reference>
<protein>
    <recommendedName>
        <fullName evidence="1">PKHD-type hydroxylase Rmet_3078</fullName>
        <ecNumber evidence="1">1.14.11.-</ecNumber>
    </recommendedName>
</protein>
<organism>
    <name type="scientific">Cupriavidus metallidurans (strain ATCC 43123 / DSM 2839 / NBRC 102507 / CH34)</name>
    <name type="common">Ralstonia metallidurans</name>
    <dbReference type="NCBI Taxonomy" id="266264"/>
    <lineage>
        <taxon>Bacteria</taxon>
        <taxon>Pseudomonadati</taxon>
        <taxon>Pseudomonadota</taxon>
        <taxon>Betaproteobacteria</taxon>
        <taxon>Burkholderiales</taxon>
        <taxon>Burkholderiaceae</taxon>
        <taxon>Cupriavidus</taxon>
    </lineage>
</organism>
<gene>
    <name type="ordered locus">Rmet_3078</name>
</gene>